<feature type="chain" id="PRO_1000021498" description="Hydroxyethylthiazole kinase">
    <location>
        <begin position="1"/>
        <end position="268"/>
    </location>
</feature>
<feature type="binding site" evidence="1">
    <location>
        <position position="45"/>
    </location>
    <ligand>
        <name>substrate</name>
    </ligand>
</feature>
<feature type="binding site" evidence="1">
    <location>
        <position position="121"/>
    </location>
    <ligand>
        <name>ATP</name>
        <dbReference type="ChEBI" id="CHEBI:30616"/>
    </ligand>
</feature>
<feature type="binding site" evidence="1">
    <location>
        <position position="167"/>
    </location>
    <ligand>
        <name>ATP</name>
        <dbReference type="ChEBI" id="CHEBI:30616"/>
    </ligand>
</feature>
<feature type="binding site" evidence="1">
    <location>
        <position position="194"/>
    </location>
    <ligand>
        <name>substrate</name>
    </ligand>
</feature>
<keyword id="KW-0067">ATP-binding</keyword>
<keyword id="KW-0418">Kinase</keyword>
<keyword id="KW-0460">Magnesium</keyword>
<keyword id="KW-0479">Metal-binding</keyword>
<keyword id="KW-0547">Nucleotide-binding</keyword>
<keyword id="KW-0784">Thiamine biosynthesis</keyword>
<keyword id="KW-0808">Transferase</keyword>
<comment type="function">
    <text evidence="1">Catalyzes the phosphorylation of the hydroxyl group of 4-methyl-5-beta-hydroxyethylthiazole (THZ).</text>
</comment>
<comment type="catalytic activity">
    <reaction evidence="1">
        <text>5-(2-hydroxyethyl)-4-methylthiazole + ATP = 4-methyl-5-(2-phosphooxyethyl)-thiazole + ADP + H(+)</text>
        <dbReference type="Rhea" id="RHEA:24212"/>
        <dbReference type="ChEBI" id="CHEBI:15378"/>
        <dbReference type="ChEBI" id="CHEBI:17957"/>
        <dbReference type="ChEBI" id="CHEBI:30616"/>
        <dbReference type="ChEBI" id="CHEBI:58296"/>
        <dbReference type="ChEBI" id="CHEBI:456216"/>
        <dbReference type="EC" id="2.7.1.50"/>
    </reaction>
</comment>
<comment type="cofactor">
    <cofactor evidence="1">
        <name>Mg(2+)</name>
        <dbReference type="ChEBI" id="CHEBI:18420"/>
    </cofactor>
</comment>
<comment type="pathway">
    <text evidence="1">Cofactor biosynthesis; thiamine diphosphate biosynthesis; 4-methyl-5-(2-phosphoethyl)-thiazole from 5-(2-hydroxyethyl)-4-methylthiazole: step 1/1.</text>
</comment>
<comment type="similarity">
    <text evidence="1">Belongs to the Thz kinase family.</text>
</comment>
<reference key="1">
    <citation type="journal article" date="2004" name="Nucleic Acids Res.">
        <title>The genome sequence of Bacillus cereus ATCC 10987 reveals metabolic adaptations and a large plasmid related to Bacillus anthracis pXO1.</title>
        <authorList>
            <person name="Rasko D.A."/>
            <person name="Ravel J."/>
            <person name="Oekstad O.A."/>
            <person name="Helgason E."/>
            <person name="Cer R.Z."/>
            <person name="Jiang L."/>
            <person name="Shores K.A."/>
            <person name="Fouts D.E."/>
            <person name="Tourasse N.J."/>
            <person name="Angiuoli S.V."/>
            <person name="Kolonay J.F."/>
            <person name="Nelson W.C."/>
            <person name="Kolstoe A.-B."/>
            <person name="Fraser C.M."/>
            <person name="Read T.D."/>
        </authorList>
    </citation>
    <scope>NUCLEOTIDE SEQUENCE [LARGE SCALE GENOMIC DNA]</scope>
    <source>
        <strain>ATCC 10987 / NRS 248</strain>
    </source>
</reference>
<name>THIM_BACC1</name>
<proteinExistence type="inferred from homology"/>
<dbReference type="EC" id="2.7.1.50" evidence="1"/>
<dbReference type="EMBL" id="AE017194">
    <property type="protein sequence ID" value="AAS39421.1"/>
    <property type="molecule type" value="Genomic_DNA"/>
</dbReference>
<dbReference type="SMR" id="Q73E73"/>
<dbReference type="KEGG" id="bca:BCE_0486"/>
<dbReference type="HOGENOM" id="CLU_019943_0_1_9"/>
<dbReference type="UniPathway" id="UPA00060">
    <property type="reaction ID" value="UER00139"/>
</dbReference>
<dbReference type="Proteomes" id="UP000002527">
    <property type="component" value="Chromosome"/>
</dbReference>
<dbReference type="GO" id="GO:0005524">
    <property type="term" value="F:ATP binding"/>
    <property type="evidence" value="ECO:0007669"/>
    <property type="project" value="UniProtKB-UniRule"/>
</dbReference>
<dbReference type="GO" id="GO:0004417">
    <property type="term" value="F:hydroxyethylthiazole kinase activity"/>
    <property type="evidence" value="ECO:0007669"/>
    <property type="project" value="UniProtKB-UniRule"/>
</dbReference>
<dbReference type="GO" id="GO:0000287">
    <property type="term" value="F:magnesium ion binding"/>
    <property type="evidence" value="ECO:0007669"/>
    <property type="project" value="UniProtKB-UniRule"/>
</dbReference>
<dbReference type="GO" id="GO:0009228">
    <property type="term" value="P:thiamine biosynthetic process"/>
    <property type="evidence" value="ECO:0007669"/>
    <property type="project" value="UniProtKB-KW"/>
</dbReference>
<dbReference type="GO" id="GO:0009229">
    <property type="term" value="P:thiamine diphosphate biosynthetic process"/>
    <property type="evidence" value="ECO:0007669"/>
    <property type="project" value="UniProtKB-UniRule"/>
</dbReference>
<dbReference type="CDD" id="cd01170">
    <property type="entry name" value="THZ_kinase"/>
    <property type="match status" value="1"/>
</dbReference>
<dbReference type="FunFam" id="3.40.1190.20:FF:000027">
    <property type="entry name" value="Hydroxyethylthiazole kinase"/>
    <property type="match status" value="1"/>
</dbReference>
<dbReference type="Gene3D" id="3.40.1190.20">
    <property type="match status" value="1"/>
</dbReference>
<dbReference type="HAMAP" id="MF_00228">
    <property type="entry name" value="Thz_kinase"/>
    <property type="match status" value="1"/>
</dbReference>
<dbReference type="InterPro" id="IPR000417">
    <property type="entry name" value="Hyethyz_kinase"/>
</dbReference>
<dbReference type="InterPro" id="IPR029056">
    <property type="entry name" value="Ribokinase-like"/>
</dbReference>
<dbReference type="NCBIfam" id="NF006830">
    <property type="entry name" value="PRK09355.1"/>
    <property type="match status" value="1"/>
</dbReference>
<dbReference type="NCBIfam" id="TIGR00694">
    <property type="entry name" value="thiM"/>
    <property type="match status" value="1"/>
</dbReference>
<dbReference type="Pfam" id="PF02110">
    <property type="entry name" value="HK"/>
    <property type="match status" value="1"/>
</dbReference>
<dbReference type="PIRSF" id="PIRSF000513">
    <property type="entry name" value="Thz_kinase"/>
    <property type="match status" value="1"/>
</dbReference>
<dbReference type="PRINTS" id="PR01099">
    <property type="entry name" value="HYETHTZKNASE"/>
</dbReference>
<dbReference type="SUPFAM" id="SSF53613">
    <property type="entry name" value="Ribokinase-like"/>
    <property type="match status" value="1"/>
</dbReference>
<protein>
    <recommendedName>
        <fullName evidence="1">Hydroxyethylthiazole kinase</fullName>
        <ecNumber evidence="1">2.7.1.50</ecNumber>
    </recommendedName>
    <alternativeName>
        <fullName evidence="1">4-methyl-5-beta-hydroxyethylthiazole kinase</fullName>
        <shortName evidence="1">TH kinase</shortName>
        <shortName evidence="1">Thz kinase</shortName>
    </alternativeName>
</protein>
<sequence>MNMKEISKVVDLVRESNPLVHNITNVVVTNFTANGLLALGASPVMAYAKEEVAEMASIAGALVLNMGTLRPEEVEAMLLAGKSANVNNVPVLFDPVGAGATSYRTEVARHIPAEIELAIIRGNAAEIANVINERWEIKGVDAGAGNGNVVSIAKQAADELNTVAVITGEEDVVTDGERTIVIQNGHSILTKVTGTGCLLTSVIGAFVAVEKDYVKAAIAALTFYGVAAELAAAKTVEKGPGSFQIEFLNQLANTTSGDIEKYGKIEVI</sequence>
<evidence type="ECO:0000255" key="1">
    <source>
        <dbReference type="HAMAP-Rule" id="MF_00228"/>
    </source>
</evidence>
<accession>Q73E73</accession>
<organism>
    <name type="scientific">Bacillus cereus (strain ATCC 10987 / NRS 248)</name>
    <dbReference type="NCBI Taxonomy" id="222523"/>
    <lineage>
        <taxon>Bacteria</taxon>
        <taxon>Bacillati</taxon>
        <taxon>Bacillota</taxon>
        <taxon>Bacilli</taxon>
        <taxon>Bacillales</taxon>
        <taxon>Bacillaceae</taxon>
        <taxon>Bacillus</taxon>
        <taxon>Bacillus cereus group</taxon>
    </lineage>
</organism>
<gene>
    <name evidence="1" type="primary">thiM</name>
    <name type="ordered locus">BCE_0486</name>
</gene>